<protein>
    <recommendedName>
        <fullName evidence="1">3-phosphoshikimate 1-carboxyvinyltransferase</fullName>
        <ecNumber evidence="1">2.5.1.19</ecNumber>
    </recommendedName>
    <alternativeName>
        <fullName evidence="1">5-enolpyruvylshikimate-3-phosphate synthase</fullName>
        <shortName evidence="1">EPSP synthase</shortName>
        <shortName evidence="1">EPSPS</shortName>
    </alternativeName>
</protein>
<feature type="chain" id="PRO_0000088244" description="3-phosphoshikimate 1-carboxyvinyltransferase">
    <location>
        <begin position="1"/>
        <end position="445"/>
    </location>
</feature>
<feature type="active site" description="Proton acceptor" evidence="1">
    <location>
        <position position="307"/>
    </location>
</feature>
<feature type="binding site" evidence="1">
    <location>
        <position position="21"/>
    </location>
    <ligand>
        <name>3-phosphoshikimate</name>
        <dbReference type="ChEBI" id="CHEBI:145989"/>
    </ligand>
</feature>
<feature type="binding site" evidence="1">
    <location>
        <position position="21"/>
    </location>
    <ligand>
        <name>phosphoenolpyruvate</name>
        <dbReference type="ChEBI" id="CHEBI:58702"/>
    </ligand>
</feature>
<feature type="binding site" evidence="1">
    <location>
        <position position="22"/>
    </location>
    <ligand>
        <name>3-phosphoshikimate</name>
        <dbReference type="ChEBI" id="CHEBI:145989"/>
    </ligand>
</feature>
<feature type="binding site" evidence="1">
    <location>
        <position position="26"/>
    </location>
    <ligand>
        <name>3-phosphoshikimate</name>
        <dbReference type="ChEBI" id="CHEBI:145989"/>
    </ligand>
</feature>
<feature type="binding site" evidence="1">
    <location>
        <position position="92"/>
    </location>
    <ligand>
        <name>phosphoenolpyruvate</name>
        <dbReference type="ChEBI" id="CHEBI:58702"/>
    </ligand>
</feature>
<feature type="binding site" evidence="1">
    <location>
        <position position="120"/>
    </location>
    <ligand>
        <name>phosphoenolpyruvate</name>
        <dbReference type="ChEBI" id="CHEBI:58702"/>
    </ligand>
</feature>
<feature type="binding site" evidence="1">
    <location>
        <position position="165"/>
    </location>
    <ligand>
        <name>3-phosphoshikimate</name>
        <dbReference type="ChEBI" id="CHEBI:145989"/>
    </ligand>
</feature>
<feature type="binding site" evidence="1">
    <location>
        <position position="166"/>
    </location>
    <ligand>
        <name>3-phosphoshikimate</name>
        <dbReference type="ChEBI" id="CHEBI:145989"/>
    </ligand>
</feature>
<feature type="binding site" evidence="1">
    <location>
        <position position="166"/>
    </location>
    <ligand>
        <name>phosphoenolpyruvate</name>
        <dbReference type="ChEBI" id="CHEBI:58702"/>
    </ligand>
</feature>
<feature type="binding site" evidence="1">
    <location>
        <position position="307"/>
    </location>
    <ligand>
        <name>3-phosphoshikimate</name>
        <dbReference type="ChEBI" id="CHEBI:145989"/>
    </ligand>
</feature>
<feature type="binding site" evidence="1">
    <location>
        <position position="334"/>
    </location>
    <ligand>
        <name>3-phosphoshikimate</name>
        <dbReference type="ChEBI" id="CHEBI:145989"/>
    </ligand>
</feature>
<feature type="binding site" evidence="1">
    <location>
        <position position="338"/>
    </location>
    <ligand>
        <name>phosphoenolpyruvate</name>
        <dbReference type="ChEBI" id="CHEBI:58702"/>
    </ligand>
</feature>
<feature type="binding site" evidence="1">
    <location>
        <position position="379"/>
    </location>
    <ligand>
        <name>phosphoenolpyruvate</name>
        <dbReference type="ChEBI" id="CHEBI:58702"/>
    </ligand>
</feature>
<feature type="binding site" evidence="1">
    <location>
        <position position="405"/>
    </location>
    <ligand>
        <name>phosphoenolpyruvate</name>
        <dbReference type="ChEBI" id="CHEBI:58702"/>
    </ligand>
</feature>
<evidence type="ECO:0000255" key="1">
    <source>
        <dbReference type="HAMAP-Rule" id="MF_00210"/>
    </source>
</evidence>
<evidence type="ECO:0000305" key="2"/>
<keyword id="KW-0028">Amino-acid biosynthesis</keyword>
<keyword id="KW-0057">Aromatic amino acid biosynthesis</keyword>
<keyword id="KW-0963">Cytoplasm</keyword>
<keyword id="KW-0808">Transferase</keyword>
<reference key="1">
    <citation type="journal article" date="1999" name="Nat. Genet.">
        <title>Comparative genomes of Chlamydia pneumoniae and C. trachomatis.</title>
        <authorList>
            <person name="Kalman S."/>
            <person name="Mitchell W.P."/>
            <person name="Marathe R."/>
            <person name="Lammel C.J."/>
            <person name="Fan J."/>
            <person name="Hyman R.W."/>
            <person name="Olinger L."/>
            <person name="Grimwood J."/>
            <person name="Davis R.W."/>
            <person name="Stephens R.S."/>
        </authorList>
    </citation>
    <scope>NUCLEOTIDE SEQUENCE [LARGE SCALE GENOMIC DNA]</scope>
    <source>
        <strain>CWL029</strain>
    </source>
</reference>
<reference key="2">
    <citation type="journal article" date="2000" name="Nucleic Acids Res.">
        <title>Genome sequences of Chlamydia trachomatis MoPn and Chlamydia pneumoniae AR39.</title>
        <authorList>
            <person name="Read T.D."/>
            <person name="Brunham R.C."/>
            <person name="Shen C."/>
            <person name="Gill S.R."/>
            <person name="Heidelberg J.F."/>
            <person name="White O."/>
            <person name="Hickey E.K."/>
            <person name="Peterson J.D."/>
            <person name="Utterback T.R."/>
            <person name="Berry K.J."/>
            <person name="Bass S."/>
            <person name="Linher K.D."/>
            <person name="Weidman J.F."/>
            <person name="Khouri H.M."/>
            <person name="Craven B."/>
            <person name="Bowman C."/>
            <person name="Dodson R.J."/>
            <person name="Gwinn M.L."/>
            <person name="Nelson W.C."/>
            <person name="DeBoy R.T."/>
            <person name="Kolonay J.F."/>
            <person name="McClarty G."/>
            <person name="Salzberg S.L."/>
            <person name="Eisen J.A."/>
            <person name="Fraser C.M."/>
        </authorList>
    </citation>
    <scope>NUCLEOTIDE SEQUENCE [LARGE SCALE GENOMIC DNA]</scope>
    <source>
        <strain>AR39</strain>
    </source>
</reference>
<reference key="3">
    <citation type="journal article" date="2000" name="Nucleic Acids Res.">
        <title>Comparison of whole genome sequences of Chlamydia pneumoniae J138 from Japan and CWL029 from USA.</title>
        <authorList>
            <person name="Shirai M."/>
            <person name="Hirakawa H."/>
            <person name="Kimoto M."/>
            <person name="Tabuchi M."/>
            <person name="Kishi F."/>
            <person name="Ouchi K."/>
            <person name="Shiba T."/>
            <person name="Ishii K."/>
            <person name="Hattori M."/>
            <person name="Kuhara S."/>
            <person name="Nakazawa T."/>
        </authorList>
    </citation>
    <scope>NUCLEOTIDE SEQUENCE [LARGE SCALE GENOMIC DNA]</scope>
    <source>
        <strain>J138</strain>
    </source>
</reference>
<reference key="4">
    <citation type="submission" date="2002-05" db="EMBL/GenBank/DDBJ databases">
        <title>The genome sequence of Chlamydia pneumoniae TW183 and comparison with other Chlamydia strains based on whole genome sequence analysis.</title>
        <authorList>
            <person name="Geng M.M."/>
            <person name="Schuhmacher A."/>
            <person name="Muehldorfer I."/>
            <person name="Bensch K.W."/>
            <person name="Schaefer K.P."/>
            <person name="Schneider S."/>
            <person name="Pohl T."/>
            <person name="Essig A."/>
            <person name="Marre R."/>
            <person name="Melchers K."/>
        </authorList>
    </citation>
    <scope>NUCLEOTIDE SEQUENCE [LARGE SCALE GENOMIC DNA]</scope>
    <source>
        <strain>TW-183</strain>
    </source>
</reference>
<gene>
    <name evidence="1" type="primary">aroA</name>
    <name type="ordered locus">CPn_1039</name>
    <name type="ordered locus">CP_0813</name>
    <name type="ordered locus">CpB1079</name>
</gene>
<accession>Q9Z6M0</accession>
<accession>Q9JQ85</accession>
<dbReference type="EC" id="2.5.1.19" evidence="1"/>
<dbReference type="EMBL" id="AE001363">
    <property type="protein sequence ID" value="AAD19176.1"/>
    <property type="molecule type" value="Genomic_DNA"/>
</dbReference>
<dbReference type="EMBL" id="AE002161">
    <property type="protein sequence ID" value="AAF73706.1"/>
    <property type="molecule type" value="Genomic_DNA"/>
</dbReference>
<dbReference type="EMBL" id="BA000008">
    <property type="protein sequence ID" value="BAA99246.1"/>
    <property type="molecule type" value="Genomic_DNA"/>
</dbReference>
<dbReference type="EMBL" id="AE009440">
    <property type="protein sequence ID" value="AAP99008.1"/>
    <property type="molecule type" value="Genomic_DNA"/>
</dbReference>
<dbReference type="PIR" id="C72004">
    <property type="entry name" value="C72004"/>
</dbReference>
<dbReference type="PIR" id="D86620">
    <property type="entry name" value="D86620"/>
</dbReference>
<dbReference type="RefSeq" id="NP_225233.1">
    <property type="nucleotide sequence ID" value="NC_000922.1"/>
</dbReference>
<dbReference type="RefSeq" id="WP_010883672.1">
    <property type="nucleotide sequence ID" value="NZ_LN847257.1"/>
</dbReference>
<dbReference type="SMR" id="Q9Z6M0"/>
<dbReference type="STRING" id="406984.CPK_ORF00466"/>
<dbReference type="GeneID" id="45051097"/>
<dbReference type="KEGG" id="cpa:CP_0813"/>
<dbReference type="KEGG" id="cpj:aroA"/>
<dbReference type="KEGG" id="cpn:CPn_1039"/>
<dbReference type="KEGG" id="cpt:CpB1079"/>
<dbReference type="PATRIC" id="fig|115713.3.peg.1137"/>
<dbReference type="eggNOG" id="COG0128">
    <property type="taxonomic scope" value="Bacteria"/>
</dbReference>
<dbReference type="HOGENOM" id="CLU_024321_0_0_0"/>
<dbReference type="UniPathway" id="UPA00053">
    <property type="reaction ID" value="UER00089"/>
</dbReference>
<dbReference type="Proteomes" id="UP000000583">
    <property type="component" value="Chromosome"/>
</dbReference>
<dbReference type="Proteomes" id="UP000000801">
    <property type="component" value="Chromosome"/>
</dbReference>
<dbReference type="GO" id="GO:0005737">
    <property type="term" value="C:cytoplasm"/>
    <property type="evidence" value="ECO:0007669"/>
    <property type="project" value="UniProtKB-SubCell"/>
</dbReference>
<dbReference type="GO" id="GO:0003866">
    <property type="term" value="F:3-phosphoshikimate 1-carboxyvinyltransferase activity"/>
    <property type="evidence" value="ECO:0007669"/>
    <property type="project" value="UniProtKB-UniRule"/>
</dbReference>
<dbReference type="GO" id="GO:0008652">
    <property type="term" value="P:amino acid biosynthetic process"/>
    <property type="evidence" value="ECO:0007669"/>
    <property type="project" value="UniProtKB-KW"/>
</dbReference>
<dbReference type="GO" id="GO:0009073">
    <property type="term" value="P:aromatic amino acid family biosynthetic process"/>
    <property type="evidence" value="ECO:0007669"/>
    <property type="project" value="UniProtKB-KW"/>
</dbReference>
<dbReference type="GO" id="GO:0009423">
    <property type="term" value="P:chorismate biosynthetic process"/>
    <property type="evidence" value="ECO:0007669"/>
    <property type="project" value="UniProtKB-UniRule"/>
</dbReference>
<dbReference type="CDD" id="cd01556">
    <property type="entry name" value="EPSP_synthase"/>
    <property type="match status" value="1"/>
</dbReference>
<dbReference type="Gene3D" id="3.65.10.10">
    <property type="entry name" value="Enolpyruvate transferase domain"/>
    <property type="match status" value="2"/>
</dbReference>
<dbReference type="HAMAP" id="MF_00210">
    <property type="entry name" value="EPSP_synth"/>
    <property type="match status" value="1"/>
</dbReference>
<dbReference type="InterPro" id="IPR001986">
    <property type="entry name" value="Enolpyruvate_Tfrase_dom"/>
</dbReference>
<dbReference type="InterPro" id="IPR036968">
    <property type="entry name" value="Enolpyruvate_Tfrase_sf"/>
</dbReference>
<dbReference type="InterPro" id="IPR006264">
    <property type="entry name" value="EPSP_synthase"/>
</dbReference>
<dbReference type="InterPro" id="IPR023193">
    <property type="entry name" value="EPSP_synthase_CS"/>
</dbReference>
<dbReference type="InterPro" id="IPR013792">
    <property type="entry name" value="RNA3'P_cycl/enolpyr_Trfase_a/b"/>
</dbReference>
<dbReference type="NCBIfam" id="TIGR01356">
    <property type="entry name" value="aroA"/>
    <property type="match status" value="1"/>
</dbReference>
<dbReference type="PANTHER" id="PTHR21090">
    <property type="entry name" value="AROM/DEHYDROQUINATE SYNTHASE"/>
    <property type="match status" value="1"/>
</dbReference>
<dbReference type="PANTHER" id="PTHR21090:SF5">
    <property type="entry name" value="PENTAFUNCTIONAL AROM POLYPEPTIDE"/>
    <property type="match status" value="1"/>
</dbReference>
<dbReference type="Pfam" id="PF00275">
    <property type="entry name" value="EPSP_synthase"/>
    <property type="match status" value="1"/>
</dbReference>
<dbReference type="PIRSF" id="PIRSF000505">
    <property type="entry name" value="EPSPS"/>
    <property type="match status" value="1"/>
</dbReference>
<dbReference type="SUPFAM" id="SSF55205">
    <property type="entry name" value="EPT/RTPC-like"/>
    <property type="match status" value="1"/>
</dbReference>
<dbReference type="PROSITE" id="PS00104">
    <property type="entry name" value="EPSP_SYNTHASE_1"/>
    <property type="match status" value="1"/>
</dbReference>
<dbReference type="PROSITE" id="PS00885">
    <property type="entry name" value="EPSP_SYNTHASE_2"/>
    <property type="match status" value="1"/>
</dbReference>
<comment type="function">
    <text evidence="1">Catalyzes the transfer of the enolpyruvyl moiety of phosphoenolpyruvate (PEP) to the 5-hydroxyl of shikimate-3-phosphate (S3P) to produce enolpyruvyl shikimate-3-phosphate and inorganic phosphate.</text>
</comment>
<comment type="catalytic activity">
    <reaction evidence="1">
        <text>3-phosphoshikimate + phosphoenolpyruvate = 5-O-(1-carboxyvinyl)-3-phosphoshikimate + phosphate</text>
        <dbReference type="Rhea" id="RHEA:21256"/>
        <dbReference type="ChEBI" id="CHEBI:43474"/>
        <dbReference type="ChEBI" id="CHEBI:57701"/>
        <dbReference type="ChEBI" id="CHEBI:58702"/>
        <dbReference type="ChEBI" id="CHEBI:145989"/>
        <dbReference type="EC" id="2.5.1.19"/>
    </reaction>
    <physiologicalReaction direction="left-to-right" evidence="1">
        <dbReference type="Rhea" id="RHEA:21257"/>
    </physiologicalReaction>
</comment>
<comment type="pathway">
    <text evidence="1">Metabolic intermediate biosynthesis; chorismate biosynthesis; chorismate from D-erythrose 4-phosphate and phosphoenolpyruvate: step 6/7.</text>
</comment>
<comment type="subunit">
    <text evidence="1">Monomer.</text>
</comment>
<comment type="subcellular location">
    <subcellularLocation>
        <location evidence="1">Cytoplasm</location>
    </subcellularLocation>
</comment>
<comment type="similarity">
    <text evidence="1 2">Belongs to the EPSP synthase family.</text>
</comment>
<sequence length="445" mass="48848">MLTYKVSPSSVYGNAFIPSSKSHTLRAILWASVAEGKSIIYNYLDSPDTEAMICACKQMGASIKKFPQILEIVGNPLAIFPKYTLIDAGNSGIVLRFMTALACVFSKEITVTGSSQLQRRPMAPLLQALRNFGASFHFSSDKSVLPFTMSGPLRSAYSDVEGSDSQFASALAVACSLAEGPCSFTIIEPKERPWFDLSLWWLEKLHLPYSCSDTTYSFPGSSHPQGFSYHVTGDFSSAAFIAAAALLSKSLQPIRLRNLDILDIQGDKIFFSLMQNLGASIQYDNEEILVFPSSFSGGSIDMDGCIDALPILTVLCCFADSPSHLYNARSAKDKESDRILAITEELQKMGACIQPTHDGLLVNPSPLYGAVLDSHDDHRIAMALTIAALYASGDSRIHNTACVRKTFPNFVQTLNIMEARIEECHDNYSMWSTHKRKVFARESFG</sequence>
<name>AROA_CHLPN</name>
<organism>
    <name type="scientific">Chlamydia pneumoniae</name>
    <name type="common">Chlamydophila pneumoniae</name>
    <dbReference type="NCBI Taxonomy" id="83558"/>
    <lineage>
        <taxon>Bacteria</taxon>
        <taxon>Pseudomonadati</taxon>
        <taxon>Chlamydiota</taxon>
        <taxon>Chlamydiia</taxon>
        <taxon>Chlamydiales</taxon>
        <taxon>Chlamydiaceae</taxon>
        <taxon>Chlamydia/Chlamydophila group</taxon>
        <taxon>Chlamydia</taxon>
    </lineage>
</organism>
<proteinExistence type="inferred from homology"/>